<accession>B2G6E3</accession>
<keyword id="KW-0067">ATP-binding</keyword>
<keyword id="KW-0963">Cytoplasm</keyword>
<keyword id="KW-0227">DNA damage</keyword>
<keyword id="KW-0233">DNA recombination</keyword>
<keyword id="KW-0234">DNA repair</keyword>
<keyword id="KW-0238">DNA-binding</keyword>
<keyword id="KW-0547">Nucleotide-binding</keyword>
<keyword id="KW-0742">SOS response</keyword>
<comment type="function">
    <text evidence="1">Can catalyze the hydrolysis of ATP in the presence of single-stranded DNA, the ATP-dependent uptake of single-stranded DNA by duplex DNA, and the ATP-dependent hybridization of homologous single-stranded DNAs. It interacts with LexA causing its activation and leading to its autocatalytic cleavage.</text>
</comment>
<comment type="subcellular location">
    <subcellularLocation>
        <location evidence="1">Cytoplasm</location>
    </subcellularLocation>
</comment>
<comment type="similarity">
    <text evidence="1">Belongs to the RecA family.</text>
</comment>
<reference key="1">
    <citation type="journal article" date="2008" name="DNA Res.">
        <title>Comparative genome analysis of Lactobacillus reuteri and Lactobacillus fermentum reveal a genomic island for reuterin and cobalamin production.</title>
        <authorList>
            <person name="Morita H."/>
            <person name="Toh H."/>
            <person name="Fukuda S."/>
            <person name="Horikawa H."/>
            <person name="Oshima K."/>
            <person name="Suzuki T."/>
            <person name="Murakami M."/>
            <person name="Hisamatsu S."/>
            <person name="Kato Y."/>
            <person name="Takizawa T."/>
            <person name="Fukuoka H."/>
            <person name="Yoshimura T."/>
            <person name="Itoh K."/>
            <person name="O'Sullivan D.J."/>
            <person name="McKay L.L."/>
            <person name="Ohno H."/>
            <person name="Kikuchi J."/>
            <person name="Masaoka T."/>
            <person name="Hattori M."/>
        </authorList>
    </citation>
    <scope>NUCLEOTIDE SEQUENCE [LARGE SCALE GENOMIC DNA]</scope>
    <source>
        <strain>JCM 1112</strain>
    </source>
</reference>
<dbReference type="EMBL" id="AP007281">
    <property type="protein sequence ID" value="BAG25025.1"/>
    <property type="molecule type" value="Genomic_DNA"/>
</dbReference>
<dbReference type="RefSeq" id="WP_003667620.1">
    <property type="nucleotide sequence ID" value="NC_010609.1"/>
</dbReference>
<dbReference type="SMR" id="B2G6E3"/>
<dbReference type="GeneID" id="77192019"/>
<dbReference type="KEGG" id="lrf:LAR_0509"/>
<dbReference type="HOGENOM" id="CLU_040469_3_2_9"/>
<dbReference type="GO" id="GO:0005829">
    <property type="term" value="C:cytosol"/>
    <property type="evidence" value="ECO:0007669"/>
    <property type="project" value="TreeGrafter"/>
</dbReference>
<dbReference type="GO" id="GO:0005524">
    <property type="term" value="F:ATP binding"/>
    <property type="evidence" value="ECO:0007669"/>
    <property type="project" value="UniProtKB-UniRule"/>
</dbReference>
<dbReference type="GO" id="GO:0016887">
    <property type="term" value="F:ATP hydrolysis activity"/>
    <property type="evidence" value="ECO:0007669"/>
    <property type="project" value="InterPro"/>
</dbReference>
<dbReference type="GO" id="GO:0140664">
    <property type="term" value="F:ATP-dependent DNA damage sensor activity"/>
    <property type="evidence" value="ECO:0007669"/>
    <property type="project" value="InterPro"/>
</dbReference>
<dbReference type="GO" id="GO:0003684">
    <property type="term" value="F:damaged DNA binding"/>
    <property type="evidence" value="ECO:0007669"/>
    <property type="project" value="UniProtKB-UniRule"/>
</dbReference>
<dbReference type="GO" id="GO:0003697">
    <property type="term" value="F:single-stranded DNA binding"/>
    <property type="evidence" value="ECO:0007669"/>
    <property type="project" value="UniProtKB-UniRule"/>
</dbReference>
<dbReference type="GO" id="GO:0006310">
    <property type="term" value="P:DNA recombination"/>
    <property type="evidence" value="ECO:0007669"/>
    <property type="project" value="UniProtKB-UniRule"/>
</dbReference>
<dbReference type="GO" id="GO:0006281">
    <property type="term" value="P:DNA repair"/>
    <property type="evidence" value="ECO:0007669"/>
    <property type="project" value="UniProtKB-UniRule"/>
</dbReference>
<dbReference type="GO" id="GO:0009432">
    <property type="term" value="P:SOS response"/>
    <property type="evidence" value="ECO:0007669"/>
    <property type="project" value="UniProtKB-UniRule"/>
</dbReference>
<dbReference type="CDD" id="cd00983">
    <property type="entry name" value="RecA"/>
    <property type="match status" value="1"/>
</dbReference>
<dbReference type="FunFam" id="3.40.50.300:FF:000087">
    <property type="entry name" value="Recombinase RecA"/>
    <property type="match status" value="1"/>
</dbReference>
<dbReference type="Gene3D" id="3.40.50.300">
    <property type="entry name" value="P-loop containing nucleotide triphosphate hydrolases"/>
    <property type="match status" value="1"/>
</dbReference>
<dbReference type="HAMAP" id="MF_00268">
    <property type="entry name" value="RecA"/>
    <property type="match status" value="1"/>
</dbReference>
<dbReference type="InterPro" id="IPR003593">
    <property type="entry name" value="AAA+_ATPase"/>
</dbReference>
<dbReference type="InterPro" id="IPR013765">
    <property type="entry name" value="DNA_recomb/repair_RecA"/>
</dbReference>
<dbReference type="InterPro" id="IPR020584">
    <property type="entry name" value="DNA_recomb/repair_RecA_CS"/>
</dbReference>
<dbReference type="InterPro" id="IPR027417">
    <property type="entry name" value="P-loop_NTPase"/>
</dbReference>
<dbReference type="InterPro" id="IPR049261">
    <property type="entry name" value="RecA-like_C"/>
</dbReference>
<dbReference type="InterPro" id="IPR049428">
    <property type="entry name" value="RecA-like_N"/>
</dbReference>
<dbReference type="InterPro" id="IPR020588">
    <property type="entry name" value="RecA_ATP-bd"/>
</dbReference>
<dbReference type="InterPro" id="IPR023400">
    <property type="entry name" value="RecA_C_sf"/>
</dbReference>
<dbReference type="InterPro" id="IPR020587">
    <property type="entry name" value="RecA_monomer-monomer_interface"/>
</dbReference>
<dbReference type="NCBIfam" id="TIGR02012">
    <property type="entry name" value="tigrfam_recA"/>
    <property type="match status" value="1"/>
</dbReference>
<dbReference type="PANTHER" id="PTHR45900:SF1">
    <property type="entry name" value="MITOCHONDRIAL DNA REPAIR PROTEIN RECA HOMOLOG-RELATED"/>
    <property type="match status" value="1"/>
</dbReference>
<dbReference type="PANTHER" id="PTHR45900">
    <property type="entry name" value="RECA"/>
    <property type="match status" value="1"/>
</dbReference>
<dbReference type="Pfam" id="PF00154">
    <property type="entry name" value="RecA"/>
    <property type="match status" value="1"/>
</dbReference>
<dbReference type="Pfam" id="PF21096">
    <property type="entry name" value="RecA_C"/>
    <property type="match status" value="1"/>
</dbReference>
<dbReference type="PRINTS" id="PR00142">
    <property type="entry name" value="RECA"/>
</dbReference>
<dbReference type="SMART" id="SM00382">
    <property type="entry name" value="AAA"/>
    <property type="match status" value="1"/>
</dbReference>
<dbReference type="SUPFAM" id="SSF52540">
    <property type="entry name" value="P-loop containing nucleoside triphosphate hydrolases"/>
    <property type="match status" value="1"/>
</dbReference>
<dbReference type="SUPFAM" id="SSF54752">
    <property type="entry name" value="RecA protein, C-terminal domain"/>
    <property type="match status" value="1"/>
</dbReference>
<dbReference type="PROSITE" id="PS00321">
    <property type="entry name" value="RECA_1"/>
    <property type="match status" value="1"/>
</dbReference>
<dbReference type="PROSITE" id="PS50162">
    <property type="entry name" value="RECA_2"/>
    <property type="match status" value="1"/>
</dbReference>
<dbReference type="PROSITE" id="PS50163">
    <property type="entry name" value="RECA_3"/>
    <property type="match status" value="1"/>
</dbReference>
<sequence>MADQRKAALDVAIRKIEKNFGKGSIMRMGDATDMKVASVSSGSLAIDKALGIGGYPRGRIVEIYGPESSGKTTVALHAVAEVQRQGGTAAYIDAENALDPQYAEALGVNIDDLLLSQPDSGEEGLEIADALISSGAVDLVIVDSVAALVPRAEIDGDMGDTHVGLQARLMSQALRKLSGEINKTKTIAIFINQIREKVGVMFGNPETTTGGRALKFYSTIRMEIRRAEQIKNGTDVIGNKAKVKIVKNKVAPPFKRCEVDIMYGEGISKTGELLDMAVENDLVDKSGAWYSYGSERIGQGRENAKKWLKEHPDSMNELMDKVRVANGMEPLNEKSTKETADDKASGKTGENKQETIEEASKE</sequence>
<proteinExistence type="inferred from homology"/>
<protein>
    <recommendedName>
        <fullName evidence="1">Protein RecA</fullName>
    </recommendedName>
    <alternativeName>
        <fullName evidence="1">Recombinase A</fullName>
    </alternativeName>
</protein>
<feature type="chain" id="PRO_1000114344" description="Protein RecA">
    <location>
        <begin position="1"/>
        <end position="362"/>
    </location>
</feature>
<feature type="region of interest" description="Disordered" evidence="2">
    <location>
        <begin position="323"/>
        <end position="362"/>
    </location>
</feature>
<feature type="compositionally biased region" description="Basic and acidic residues" evidence="2">
    <location>
        <begin position="331"/>
        <end position="362"/>
    </location>
</feature>
<feature type="binding site" evidence="1">
    <location>
        <begin position="65"/>
        <end position="72"/>
    </location>
    <ligand>
        <name>ATP</name>
        <dbReference type="ChEBI" id="CHEBI:30616"/>
    </ligand>
</feature>
<name>RECA_LIMRJ</name>
<evidence type="ECO:0000255" key="1">
    <source>
        <dbReference type="HAMAP-Rule" id="MF_00268"/>
    </source>
</evidence>
<evidence type="ECO:0000256" key="2">
    <source>
        <dbReference type="SAM" id="MobiDB-lite"/>
    </source>
</evidence>
<organism>
    <name type="scientific">Limosilactobacillus reuteri subsp. reuteri (strain JCM 1112)</name>
    <name type="common">Lactobacillus reuteri</name>
    <dbReference type="NCBI Taxonomy" id="557433"/>
    <lineage>
        <taxon>Bacteria</taxon>
        <taxon>Bacillati</taxon>
        <taxon>Bacillota</taxon>
        <taxon>Bacilli</taxon>
        <taxon>Lactobacillales</taxon>
        <taxon>Lactobacillaceae</taxon>
        <taxon>Limosilactobacillus</taxon>
    </lineage>
</organism>
<gene>
    <name evidence="1" type="primary">recA</name>
    <name type="ordered locus">LAR_0509</name>
</gene>